<accession>Q8CXD0</accession>
<gene>
    <name evidence="1" type="primary">lepA</name>
    <name type="ordered locus">OB1972</name>
</gene>
<protein>
    <recommendedName>
        <fullName evidence="1">Elongation factor 4</fullName>
        <shortName evidence="1">EF-4</shortName>
        <ecNumber evidence="1">3.6.5.n1</ecNumber>
    </recommendedName>
    <alternativeName>
        <fullName evidence="1">Ribosomal back-translocase LepA</fullName>
    </alternativeName>
</protein>
<feature type="chain" id="PRO_0000176312" description="Elongation factor 4">
    <location>
        <begin position="1"/>
        <end position="602"/>
    </location>
</feature>
<feature type="domain" description="tr-type G">
    <location>
        <begin position="6"/>
        <end position="188"/>
    </location>
</feature>
<feature type="binding site" evidence="1">
    <location>
        <begin position="18"/>
        <end position="23"/>
    </location>
    <ligand>
        <name>GTP</name>
        <dbReference type="ChEBI" id="CHEBI:37565"/>
    </ligand>
</feature>
<feature type="binding site" evidence="1">
    <location>
        <begin position="135"/>
        <end position="138"/>
    </location>
    <ligand>
        <name>GTP</name>
        <dbReference type="ChEBI" id="CHEBI:37565"/>
    </ligand>
</feature>
<name>LEPA_OCEIH</name>
<organism>
    <name type="scientific">Oceanobacillus iheyensis (strain DSM 14371 / CIP 107618 / JCM 11309 / KCTC 3954 / HTE831)</name>
    <dbReference type="NCBI Taxonomy" id="221109"/>
    <lineage>
        <taxon>Bacteria</taxon>
        <taxon>Bacillati</taxon>
        <taxon>Bacillota</taxon>
        <taxon>Bacilli</taxon>
        <taxon>Bacillales</taxon>
        <taxon>Bacillaceae</taxon>
        <taxon>Oceanobacillus</taxon>
    </lineage>
</organism>
<sequence>MANKKRNVRNFSIIAHIDHGKSTLADRILENTKTVTKREMKDQLLDGMDLERERGITIKLNAVQLAYTSNKGEDFIFHLIDTPGHVDFTYEVSRSLAACEGAILVVDAAQGIEAQTLANVYLAMENDLEIIPVINKIDLPSADTEKVKKELEDVLGIDGDDVILASAKANIGIEEILERITEVVPEPAGDGEAPLKALIFDSLYDSYRGVIAYVCVKEGSIKVGDKIQMMATGKEFEVNEVGVFTPKTVVKKELHVGDVGYLTASIKNVGDSRVGDTITHANRKANEALPGYRRLNPMVFCGMYPVDTNDYNDLREALERLELNDSSLQYEPETSQALGFGYRCGFLGLLHMEIIQERIEREFGINLITTAPSVIFEVEKTDGEVLNIDNPSEMPDPQVVEQIREPYVEATIMVPNEYVGPVMEISQKKRGNFIDMQYLDDIRVNVVYHIPLSEIVFDFFDQLKSNTKGYASFDYELIGYQQSNLVKMDILLNGDTIDALSFVVHRDFAYERGKQIVEKLKELIPRQQFEVPVQAAIGNKIVARSNIKAVRKDVTAKLYGGDITRKRKLLEKQKEGKKRMKMVGSVEVPQEAFMAVLKMDDN</sequence>
<comment type="function">
    <text evidence="1">Required for accurate and efficient protein synthesis under certain stress conditions. May act as a fidelity factor of the translation reaction, by catalyzing a one-codon backward translocation of tRNAs on improperly translocated ribosomes. Back-translocation proceeds from a post-translocation (POST) complex to a pre-translocation (PRE) complex, thus giving elongation factor G a second chance to translocate the tRNAs correctly. Binds to ribosomes in a GTP-dependent manner.</text>
</comment>
<comment type="catalytic activity">
    <reaction evidence="1">
        <text>GTP + H2O = GDP + phosphate + H(+)</text>
        <dbReference type="Rhea" id="RHEA:19669"/>
        <dbReference type="ChEBI" id="CHEBI:15377"/>
        <dbReference type="ChEBI" id="CHEBI:15378"/>
        <dbReference type="ChEBI" id="CHEBI:37565"/>
        <dbReference type="ChEBI" id="CHEBI:43474"/>
        <dbReference type="ChEBI" id="CHEBI:58189"/>
        <dbReference type="EC" id="3.6.5.n1"/>
    </reaction>
</comment>
<comment type="subcellular location">
    <subcellularLocation>
        <location evidence="1">Cell membrane</location>
        <topology evidence="1">Peripheral membrane protein</topology>
        <orientation evidence="1">Cytoplasmic side</orientation>
    </subcellularLocation>
</comment>
<comment type="similarity">
    <text evidence="1">Belongs to the TRAFAC class translation factor GTPase superfamily. Classic translation factor GTPase family. LepA subfamily.</text>
</comment>
<dbReference type="EC" id="3.6.5.n1" evidence="1"/>
<dbReference type="EMBL" id="BA000028">
    <property type="protein sequence ID" value="BAC13928.1"/>
    <property type="molecule type" value="Genomic_DNA"/>
</dbReference>
<dbReference type="RefSeq" id="WP_011066369.1">
    <property type="nucleotide sequence ID" value="NC_004193.1"/>
</dbReference>
<dbReference type="SMR" id="Q8CXD0"/>
<dbReference type="STRING" id="221109.gene:10734218"/>
<dbReference type="KEGG" id="oih:OB1972"/>
<dbReference type="eggNOG" id="COG0481">
    <property type="taxonomic scope" value="Bacteria"/>
</dbReference>
<dbReference type="HOGENOM" id="CLU_009995_3_3_9"/>
<dbReference type="OrthoDB" id="9804431at2"/>
<dbReference type="PhylomeDB" id="Q8CXD0"/>
<dbReference type="Proteomes" id="UP000000822">
    <property type="component" value="Chromosome"/>
</dbReference>
<dbReference type="GO" id="GO:0005886">
    <property type="term" value="C:plasma membrane"/>
    <property type="evidence" value="ECO:0007669"/>
    <property type="project" value="UniProtKB-SubCell"/>
</dbReference>
<dbReference type="GO" id="GO:0005525">
    <property type="term" value="F:GTP binding"/>
    <property type="evidence" value="ECO:0007669"/>
    <property type="project" value="UniProtKB-UniRule"/>
</dbReference>
<dbReference type="GO" id="GO:0003924">
    <property type="term" value="F:GTPase activity"/>
    <property type="evidence" value="ECO:0007669"/>
    <property type="project" value="UniProtKB-UniRule"/>
</dbReference>
<dbReference type="GO" id="GO:0043022">
    <property type="term" value="F:ribosome binding"/>
    <property type="evidence" value="ECO:0007669"/>
    <property type="project" value="UniProtKB-UniRule"/>
</dbReference>
<dbReference type="GO" id="GO:0003746">
    <property type="term" value="F:translation elongation factor activity"/>
    <property type="evidence" value="ECO:0007669"/>
    <property type="project" value="UniProtKB-UniRule"/>
</dbReference>
<dbReference type="GO" id="GO:0045727">
    <property type="term" value="P:positive regulation of translation"/>
    <property type="evidence" value="ECO:0007669"/>
    <property type="project" value="UniProtKB-UniRule"/>
</dbReference>
<dbReference type="CDD" id="cd03699">
    <property type="entry name" value="EF4_II"/>
    <property type="match status" value="1"/>
</dbReference>
<dbReference type="CDD" id="cd16260">
    <property type="entry name" value="EF4_III"/>
    <property type="match status" value="1"/>
</dbReference>
<dbReference type="CDD" id="cd01890">
    <property type="entry name" value="LepA"/>
    <property type="match status" value="1"/>
</dbReference>
<dbReference type="CDD" id="cd03709">
    <property type="entry name" value="lepA_C"/>
    <property type="match status" value="1"/>
</dbReference>
<dbReference type="FunFam" id="3.40.50.300:FF:000078">
    <property type="entry name" value="Elongation factor 4"/>
    <property type="match status" value="1"/>
</dbReference>
<dbReference type="FunFam" id="2.40.30.10:FF:000015">
    <property type="entry name" value="Translation factor GUF1, mitochondrial"/>
    <property type="match status" value="1"/>
</dbReference>
<dbReference type="FunFam" id="3.30.70.240:FF:000007">
    <property type="entry name" value="Translation factor GUF1, mitochondrial"/>
    <property type="match status" value="1"/>
</dbReference>
<dbReference type="FunFam" id="3.30.70.2570:FF:000001">
    <property type="entry name" value="Translation factor GUF1, mitochondrial"/>
    <property type="match status" value="1"/>
</dbReference>
<dbReference type="FunFam" id="3.30.70.870:FF:000004">
    <property type="entry name" value="Translation factor GUF1, mitochondrial"/>
    <property type="match status" value="1"/>
</dbReference>
<dbReference type="Gene3D" id="3.30.70.240">
    <property type="match status" value="1"/>
</dbReference>
<dbReference type="Gene3D" id="3.30.70.2570">
    <property type="entry name" value="Elongation factor 4, C-terminal domain"/>
    <property type="match status" value="1"/>
</dbReference>
<dbReference type="Gene3D" id="3.30.70.870">
    <property type="entry name" value="Elongation Factor G (Translational Gtpase), domain 3"/>
    <property type="match status" value="1"/>
</dbReference>
<dbReference type="Gene3D" id="3.40.50.300">
    <property type="entry name" value="P-loop containing nucleotide triphosphate hydrolases"/>
    <property type="match status" value="1"/>
</dbReference>
<dbReference type="Gene3D" id="2.40.30.10">
    <property type="entry name" value="Translation factors"/>
    <property type="match status" value="1"/>
</dbReference>
<dbReference type="HAMAP" id="MF_00071">
    <property type="entry name" value="LepA"/>
    <property type="match status" value="1"/>
</dbReference>
<dbReference type="InterPro" id="IPR006297">
    <property type="entry name" value="EF-4"/>
</dbReference>
<dbReference type="InterPro" id="IPR041095">
    <property type="entry name" value="EFG_II"/>
</dbReference>
<dbReference type="InterPro" id="IPR035647">
    <property type="entry name" value="EFG_III/V"/>
</dbReference>
<dbReference type="InterPro" id="IPR000640">
    <property type="entry name" value="EFG_V-like"/>
</dbReference>
<dbReference type="InterPro" id="IPR004161">
    <property type="entry name" value="EFTu-like_2"/>
</dbReference>
<dbReference type="InterPro" id="IPR031157">
    <property type="entry name" value="G_TR_CS"/>
</dbReference>
<dbReference type="InterPro" id="IPR038363">
    <property type="entry name" value="LepA_C_sf"/>
</dbReference>
<dbReference type="InterPro" id="IPR013842">
    <property type="entry name" value="LepA_CTD"/>
</dbReference>
<dbReference type="InterPro" id="IPR035654">
    <property type="entry name" value="LepA_IV"/>
</dbReference>
<dbReference type="InterPro" id="IPR027417">
    <property type="entry name" value="P-loop_NTPase"/>
</dbReference>
<dbReference type="InterPro" id="IPR005225">
    <property type="entry name" value="Small_GTP-bd"/>
</dbReference>
<dbReference type="InterPro" id="IPR000795">
    <property type="entry name" value="T_Tr_GTP-bd_dom"/>
</dbReference>
<dbReference type="NCBIfam" id="TIGR01393">
    <property type="entry name" value="lepA"/>
    <property type="match status" value="1"/>
</dbReference>
<dbReference type="NCBIfam" id="TIGR00231">
    <property type="entry name" value="small_GTP"/>
    <property type="match status" value="1"/>
</dbReference>
<dbReference type="PANTHER" id="PTHR43512:SF4">
    <property type="entry name" value="TRANSLATION FACTOR GUF1 HOMOLOG, CHLOROPLASTIC"/>
    <property type="match status" value="1"/>
</dbReference>
<dbReference type="PANTHER" id="PTHR43512">
    <property type="entry name" value="TRANSLATION FACTOR GUF1-RELATED"/>
    <property type="match status" value="1"/>
</dbReference>
<dbReference type="Pfam" id="PF00679">
    <property type="entry name" value="EFG_C"/>
    <property type="match status" value="1"/>
</dbReference>
<dbReference type="Pfam" id="PF14492">
    <property type="entry name" value="EFG_III"/>
    <property type="match status" value="1"/>
</dbReference>
<dbReference type="Pfam" id="PF00009">
    <property type="entry name" value="GTP_EFTU"/>
    <property type="match status" value="1"/>
</dbReference>
<dbReference type="Pfam" id="PF03144">
    <property type="entry name" value="GTP_EFTU_D2"/>
    <property type="match status" value="1"/>
</dbReference>
<dbReference type="Pfam" id="PF06421">
    <property type="entry name" value="LepA_C"/>
    <property type="match status" value="1"/>
</dbReference>
<dbReference type="PRINTS" id="PR00315">
    <property type="entry name" value="ELONGATNFCT"/>
</dbReference>
<dbReference type="SMART" id="SM00838">
    <property type="entry name" value="EFG_C"/>
    <property type="match status" value="1"/>
</dbReference>
<dbReference type="SUPFAM" id="SSF54980">
    <property type="entry name" value="EF-G C-terminal domain-like"/>
    <property type="match status" value="2"/>
</dbReference>
<dbReference type="SUPFAM" id="SSF52540">
    <property type="entry name" value="P-loop containing nucleoside triphosphate hydrolases"/>
    <property type="match status" value="1"/>
</dbReference>
<dbReference type="PROSITE" id="PS00301">
    <property type="entry name" value="G_TR_1"/>
    <property type="match status" value="1"/>
</dbReference>
<dbReference type="PROSITE" id="PS51722">
    <property type="entry name" value="G_TR_2"/>
    <property type="match status" value="1"/>
</dbReference>
<evidence type="ECO:0000255" key="1">
    <source>
        <dbReference type="HAMAP-Rule" id="MF_00071"/>
    </source>
</evidence>
<reference key="1">
    <citation type="journal article" date="2002" name="Nucleic Acids Res.">
        <title>Genome sequence of Oceanobacillus iheyensis isolated from the Iheya Ridge and its unexpected adaptive capabilities to extreme environments.</title>
        <authorList>
            <person name="Takami H."/>
            <person name="Takaki Y."/>
            <person name="Uchiyama I."/>
        </authorList>
    </citation>
    <scope>NUCLEOTIDE SEQUENCE [LARGE SCALE GENOMIC DNA]</scope>
    <source>
        <strain>DSM 14371 / CIP 107618 / JCM 11309 / KCTC 3954 / HTE831</strain>
    </source>
</reference>
<keyword id="KW-1003">Cell membrane</keyword>
<keyword id="KW-0342">GTP-binding</keyword>
<keyword id="KW-0378">Hydrolase</keyword>
<keyword id="KW-0472">Membrane</keyword>
<keyword id="KW-0547">Nucleotide-binding</keyword>
<keyword id="KW-0648">Protein biosynthesis</keyword>
<keyword id="KW-1185">Reference proteome</keyword>
<proteinExistence type="inferred from homology"/>